<proteinExistence type="inferred from homology"/>
<reference key="1">
    <citation type="journal article" date="2010" name="J. Bacteriol.">
        <title>The genetic basis of laboratory adaptation in Caulobacter crescentus.</title>
        <authorList>
            <person name="Marks M.E."/>
            <person name="Castro-Rojas C.M."/>
            <person name="Teiling C."/>
            <person name="Du L."/>
            <person name="Kapatral V."/>
            <person name="Walunas T.L."/>
            <person name="Crosson S."/>
        </authorList>
    </citation>
    <scope>NUCLEOTIDE SEQUENCE [LARGE SCALE GENOMIC DNA]</scope>
    <source>
        <strain>NA1000 / CB15N</strain>
    </source>
</reference>
<dbReference type="EC" id="2.3.2.6" evidence="1"/>
<dbReference type="EMBL" id="CP001340">
    <property type="protein sequence ID" value="ACL95427.1"/>
    <property type="molecule type" value="Genomic_DNA"/>
</dbReference>
<dbReference type="RefSeq" id="WP_010919751.1">
    <property type="nucleotide sequence ID" value="NC_011916.1"/>
</dbReference>
<dbReference type="RefSeq" id="YP_002517335.1">
    <property type="nucleotide sequence ID" value="NC_011916.1"/>
</dbReference>
<dbReference type="SMR" id="B8GWN5"/>
<dbReference type="GeneID" id="7330102"/>
<dbReference type="KEGG" id="ccs:CCNA_01962"/>
<dbReference type="PATRIC" id="fig|565050.3.peg.1921"/>
<dbReference type="HOGENOM" id="CLU_075045_1_1_5"/>
<dbReference type="OrthoDB" id="9790282at2"/>
<dbReference type="PhylomeDB" id="B8GWN5"/>
<dbReference type="Proteomes" id="UP000001364">
    <property type="component" value="Chromosome"/>
</dbReference>
<dbReference type="GO" id="GO:0005737">
    <property type="term" value="C:cytoplasm"/>
    <property type="evidence" value="ECO:0007669"/>
    <property type="project" value="UniProtKB-SubCell"/>
</dbReference>
<dbReference type="GO" id="GO:0008914">
    <property type="term" value="F:leucyl-tRNA--protein transferase activity"/>
    <property type="evidence" value="ECO:0007669"/>
    <property type="project" value="UniProtKB-UniRule"/>
</dbReference>
<dbReference type="GO" id="GO:0030163">
    <property type="term" value="P:protein catabolic process"/>
    <property type="evidence" value="ECO:0007669"/>
    <property type="project" value="UniProtKB-UniRule"/>
</dbReference>
<dbReference type="FunFam" id="3.40.630.70:FF:000001">
    <property type="entry name" value="Leucyl/phenylalanyl-tRNA--protein transferase"/>
    <property type="match status" value="1"/>
</dbReference>
<dbReference type="Gene3D" id="3.40.630.70">
    <property type="entry name" value="Leucyl/phenylalanyl-tRNA-protein transferase, C-terminal domain"/>
    <property type="match status" value="1"/>
</dbReference>
<dbReference type="HAMAP" id="MF_00688">
    <property type="entry name" value="Leu_Phe_trans"/>
    <property type="match status" value="1"/>
</dbReference>
<dbReference type="InterPro" id="IPR016181">
    <property type="entry name" value="Acyl_CoA_acyltransferase"/>
</dbReference>
<dbReference type="InterPro" id="IPR004616">
    <property type="entry name" value="Leu/Phe-tRNA_Trfase"/>
</dbReference>
<dbReference type="InterPro" id="IPR042203">
    <property type="entry name" value="Leu/Phe-tRNA_Trfase_C"/>
</dbReference>
<dbReference type="NCBIfam" id="TIGR00667">
    <property type="entry name" value="aat"/>
    <property type="match status" value="1"/>
</dbReference>
<dbReference type="PANTHER" id="PTHR30098">
    <property type="entry name" value="LEUCYL/PHENYLALANYL-TRNA--PROTEIN TRANSFERASE"/>
    <property type="match status" value="1"/>
</dbReference>
<dbReference type="PANTHER" id="PTHR30098:SF2">
    <property type="entry name" value="LEUCYL_PHENYLALANYL-TRNA--PROTEIN TRANSFERASE"/>
    <property type="match status" value="1"/>
</dbReference>
<dbReference type="Pfam" id="PF03588">
    <property type="entry name" value="Leu_Phe_trans"/>
    <property type="match status" value="1"/>
</dbReference>
<dbReference type="SUPFAM" id="SSF55729">
    <property type="entry name" value="Acyl-CoA N-acyltransferases (Nat)"/>
    <property type="match status" value="1"/>
</dbReference>
<organism>
    <name type="scientific">Caulobacter vibrioides (strain NA1000 / CB15N)</name>
    <name type="common">Caulobacter crescentus</name>
    <dbReference type="NCBI Taxonomy" id="565050"/>
    <lineage>
        <taxon>Bacteria</taxon>
        <taxon>Pseudomonadati</taxon>
        <taxon>Pseudomonadota</taxon>
        <taxon>Alphaproteobacteria</taxon>
        <taxon>Caulobacterales</taxon>
        <taxon>Caulobacteraceae</taxon>
        <taxon>Caulobacter</taxon>
    </lineage>
</organism>
<protein>
    <recommendedName>
        <fullName evidence="1">Leucyl/phenylalanyl-tRNA--protein transferase</fullName>
        <ecNumber evidence="1">2.3.2.6</ecNumber>
    </recommendedName>
    <alternativeName>
        <fullName evidence="1">L/F-transferase</fullName>
    </alternativeName>
    <alternativeName>
        <fullName evidence="1">Leucyltransferase</fullName>
    </alternativeName>
    <alternativeName>
        <fullName evidence="1">Phenyalanyltransferase</fullName>
    </alternativeName>
</protein>
<comment type="function">
    <text evidence="1">Functions in the N-end rule pathway of protein degradation where it conjugates Leu, Phe and, less efficiently, Met from aminoacyl-tRNAs to the N-termini of proteins containing an N-terminal arginine or lysine.</text>
</comment>
<comment type="catalytic activity">
    <reaction evidence="1">
        <text>N-terminal L-lysyl-[protein] + L-leucyl-tRNA(Leu) = N-terminal L-leucyl-L-lysyl-[protein] + tRNA(Leu) + H(+)</text>
        <dbReference type="Rhea" id="RHEA:12340"/>
        <dbReference type="Rhea" id="RHEA-COMP:9613"/>
        <dbReference type="Rhea" id="RHEA-COMP:9622"/>
        <dbReference type="Rhea" id="RHEA-COMP:12670"/>
        <dbReference type="Rhea" id="RHEA-COMP:12671"/>
        <dbReference type="ChEBI" id="CHEBI:15378"/>
        <dbReference type="ChEBI" id="CHEBI:65249"/>
        <dbReference type="ChEBI" id="CHEBI:78442"/>
        <dbReference type="ChEBI" id="CHEBI:78494"/>
        <dbReference type="ChEBI" id="CHEBI:133043"/>
        <dbReference type="EC" id="2.3.2.6"/>
    </reaction>
</comment>
<comment type="catalytic activity">
    <reaction evidence="1">
        <text>N-terminal L-arginyl-[protein] + L-leucyl-tRNA(Leu) = N-terminal L-leucyl-L-arginyl-[protein] + tRNA(Leu) + H(+)</text>
        <dbReference type="Rhea" id="RHEA:50416"/>
        <dbReference type="Rhea" id="RHEA-COMP:9613"/>
        <dbReference type="Rhea" id="RHEA-COMP:9622"/>
        <dbReference type="Rhea" id="RHEA-COMP:12672"/>
        <dbReference type="Rhea" id="RHEA-COMP:12673"/>
        <dbReference type="ChEBI" id="CHEBI:15378"/>
        <dbReference type="ChEBI" id="CHEBI:64719"/>
        <dbReference type="ChEBI" id="CHEBI:78442"/>
        <dbReference type="ChEBI" id="CHEBI:78494"/>
        <dbReference type="ChEBI" id="CHEBI:133044"/>
        <dbReference type="EC" id="2.3.2.6"/>
    </reaction>
</comment>
<comment type="catalytic activity">
    <reaction evidence="1">
        <text>L-phenylalanyl-tRNA(Phe) + an N-terminal L-alpha-aminoacyl-[protein] = an N-terminal L-phenylalanyl-L-alpha-aminoacyl-[protein] + tRNA(Phe)</text>
        <dbReference type="Rhea" id="RHEA:43632"/>
        <dbReference type="Rhea" id="RHEA-COMP:9668"/>
        <dbReference type="Rhea" id="RHEA-COMP:9699"/>
        <dbReference type="Rhea" id="RHEA-COMP:10636"/>
        <dbReference type="Rhea" id="RHEA-COMP:10637"/>
        <dbReference type="ChEBI" id="CHEBI:78442"/>
        <dbReference type="ChEBI" id="CHEBI:78531"/>
        <dbReference type="ChEBI" id="CHEBI:78597"/>
        <dbReference type="ChEBI" id="CHEBI:83561"/>
        <dbReference type="EC" id="2.3.2.6"/>
    </reaction>
</comment>
<comment type="subcellular location">
    <subcellularLocation>
        <location evidence="1">Cytoplasm</location>
    </subcellularLocation>
</comment>
<comment type="similarity">
    <text evidence="1">Belongs to the L/F-transferase family.</text>
</comment>
<sequence>MDDAFTVDDLIACYARGVFPMADAREDESLFLIDPERRGVLPLGTFHIPKRLARTVRNGPYEVRVDTAFDTVIENCAASRPGRLDTWINHPIQRLYGQLYARGLAHSVETWLGDELVGGLYGVSLGGAFFGESMFSTARDASKVALVHLVARLIAGGYELLDTQFLTEHLAQFGVMEISRADYRRRLSKALATPGDFYGLAAGATGIDCLQAISQAS</sequence>
<evidence type="ECO:0000255" key="1">
    <source>
        <dbReference type="HAMAP-Rule" id="MF_00688"/>
    </source>
</evidence>
<name>LFTR_CAUVN</name>
<feature type="chain" id="PRO_1000147788" description="Leucyl/phenylalanyl-tRNA--protein transferase">
    <location>
        <begin position="1"/>
        <end position="217"/>
    </location>
</feature>
<accession>B8GWN5</accession>
<gene>
    <name evidence="1" type="primary">aat</name>
    <name type="ordered locus">CCNA_01962</name>
</gene>
<keyword id="KW-0012">Acyltransferase</keyword>
<keyword id="KW-0963">Cytoplasm</keyword>
<keyword id="KW-1185">Reference proteome</keyword>
<keyword id="KW-0808">Transferase</keyword>